<feature type="chain" id="PRO_1000095042" description="33 kDa chaperonin">
    <location>
        <begin position="1"/>
        <end position="293"/>
    </location>
</feature>
<feature type="disulfide bond" description="Redox-active" evidence="1">
    <location>
        <begin position="231"/>
        <end position="233"/>
    </location>
</feature>
<feature type="disulfide bond" description="Redox-active" evidence="1">
    <location>
        <begin position="264"/>
        <end position="267"/>
    </location>
</feature>
<evidence type="ECO:0000255" key="1">
    <source>
        <dbReference type="HAMAP-Rule" id="MF_00117"/>
    </source>
</evidence>
<proteinExistence type="inferred from homology"/>
<gene>
    <name evidence="1" type="primary">hslO</name>
    <name type="ordered locus">YPTS_3957</name>
</gene>
<keyword id="KW-0143">Chaperone</keyword>
<keyword id="KW-0963">Cytoplasm</keyword>
<keyword id="KW-1015">Disulfide bond</keyword>
<keyword id="KW-0676">Redox-active center</keyword>
<keyword id="KW-0862">Zinc</keyword>
<reference key="1">
    <citation type="submission" date="2008-04" db="EMBL/GenBank/DDBJ databases">
        <title>Complete sequence of Yersinia pseudotuberculosis PB1/+.</title>
        <authorList>
            <person name="Copeland A."/>
            <person name="Lucas S."/>
            <person name="Lapidus A."/>
            <person name="Glavina del Rio T."/>
            <person name="Dalin E."/>
            <person name="Tice H."/>
            <person name="Bruce D."/>
            <person name="Goodwin L."/>
            <person name="Pitluck S."/>
            <person name="Munk A.C."/>
            <person name="Brettin T."/>
            <person name="Detter J.C."/>
            <person name="Han C."/>
            <person name="Tapia R."/>
            <person name="Schmutz J."/>
            <person name="Larimer F."/>
            <person name="Land M."/>
            <person name="Hauser L."/>
            <person name="Challacombe J.F."/>
            <person name="Green L."/>
            <person name="Lindler L.E."/>
            <person name="Nikolich M.P."/>
            <person name="Richardson P."/>
        </authorList>
    </citation>
    <scope>NUCLEOTIDE SEQUENCE [LARGE SCALE GENOMIC DNA]</scope>
    <source>
        <strain>PB1/+</strain>
    </source>
</reference>
<accession>B2K5U7</accession>
<protein>
    <recommendedName>
        <fullName evidence="1">33 kDa chaperonin</fullName>
    </recommendedName>
    <alternativeName>
        <fullName evidence="1">Heat shock protein 33 homolog</fullName>
        <shortName evidence="1">HSP33</shortName>
    </alternativeName>
</protein>
<organism>
    <name type="scientific">Yersinia pseudotuberculosis serotype IB (strain PB1/+)</name>
    <dbReference type="NCBI Taxonomy" id="502801"/>
    <lineage>
        <taxon>Bacteria</taxon>
        <taxon>Pseudomonadati</taxon>
        <taxon>Pseudomonadota</taxon>
        <taxon>Gammaproteobacteria</taxon>
        <taxon>Enterobacterales</taxon>
        <taxon>Yersiniaceae</taxon>
        <taxon>Yersinia</taxon>
    </lineage>
</organism>
<dbReference type="EMBL" id="CP001048">
    <property type="protein sequence ID" value="ACC90906.1"/>
    <property type="molecule type" value="Genomic_DNA"/>
</dbReference>
<dbReference type="RefSeq" id="WP_002208911.1">
    <property type="nucleotide sequence ID" value="NZ_CP009780.1"/>
</dbReference>
<dbReference type="SMR" id="B2K5U7"/>
<dbReference type="GeneID" id="57974461"/>
<dbReference type="KEGG" id="ypb:YPTS_3957"/>
<dbReference type="PATRIC" id="fig|502801.10.peg.3422"/>
<dbReference type="GO" id="GO:0005737">
    <property type="term" value="C:cytoplasm"/>
    <property type="evidence" value="ECO:0007669"/>
    <property type="project" value="UniProtKB-SubCell"/>
</dbReference>
<dbReference type="GO" id="GO:0044183">
    <property type="term" value="F:protein folding chaperone"/>
    <property type="evidence" value="ECO:0007669"/>
    <property type="project" value="TreeGrafter"/>
</dbReference>
<dbReference type="GO" id="GO:0051082">
    <property type="term" value="F:unfolded protein binding"/>
    <property type="evidence" value="ECO:0007669"/>
    <property type="project" value="UniProtKB-UniRule"/>
</dbReference>
<dbReference type="GO" id="GO:0042026">
    <property type="term" value="P:protein refolding"/>
    <property type="evidence" value="ECO:0007669"/>
    <property type="project" value="TreeGrafter"/>
</dbReference>
<dbReference type="CDD" id="cd00498">
    <property type="entry name" value="Hsp33"/>
    <property type="match status" value="1"/>
</dbReference>
<dbReference type="Gene3D" id="1.10.287.480">
    <property type="entry name" value="helix hairpin bin"/>
    <property type="match status" value="1"/>
</dbReference>
<dbReference type="Gene3D" id="3.55.30.10">
    <property type="entry name" value="Hsp33 domain"/>
    <property type="match status" value="1"/>
</dbReference>
<dbReference type="Gene3D" id="3.90.1280.10">
    <property type="entry name" value="HSP33 redox switch-like"/>
    <property type="match status" value="1"/>
</dbReference>
<dbReference type="HAMAP" id="MF_00117">
    <property type="entry name" value="HslO"/>
    <property type="match status" value="1"/>
</dbReference>
<dbReference type="InterPro" id="IPR000397">
    <property type="entry name" value="Heat_shock_Hsp33"/>
</dbReference>
<dbReference type="InterPro" id="IPR016154">
    <property type="entry name" value="Heat_shock_Hsp33_C"/>
</dbReference>
<dbReference type="InterPro" id="IPR016153">
    <property type="entry name" value="Heat_shock_Hsp33_N"/>
</dbReference>
<dbReference type="InterPro" id="IPR023212">
    <property type="entry name" value="Hsp33_helix_hairpin_bin_dom_sf"/>
</dbReference>
<dbReference type="NCBIfam" id="NF001033">
    <property type="entry name" value="PRK00114.1"/>
    <property type="match status" value="1"/>
</dbReference>
<dbReference type="PANTHER" id="PTHR30111">
    <property type="entry name" value="33 KDA CHAPERONIN"/>
    <property type="match status" value="1"/>
</dbReference>
<dbReference type="PANTHER" id="PTHR30111:SF1">
    <property type="entry name" value="33 KDA CHAPERONIN"/>
    <property type="match status" value="1"/>
</dbReference>
<dbReference type="Pfam" id="PF01430">
    <property type="entry name" value="HSP33"/>
    <property type="match status" value="1"/>
</dbReference>
<dbReference type="PIRSF" id="PIRSF005261">
    <property type="entry name" value="Heat_shock_Hsp33"/>
    <property type="match status" value="1"/>
</dbReference>
<dbReference type="SUPFAM" id="SSF64397">
    <property type="entry name" value="Hsp33 domain"/>
    <property type="match status" value="1"/>
</dbReference>
<dbReference type="SUPFAM" id="SSF118352">
    <property type="entry name" value="HSP33 redox switch-like"/>
    <property type="match status" value="1"/>
</dbReference>
<comment type="function">
    <text evidence="1">Redox regulated molecular chaperone. Protects both thermally unfolding and oxidatively damaged proteins from irreversible aggregation. Plays an important role in the bacterial defense system toward oxidative stress.</text>
</comment>
<comment type="subcellular location">
    <subcellularLocation>
        <location evidence="1">Cytoplasm</location>
    </subcellularLocation>
</comment>
<comment type="PTM">
    <text evidence="1">Under oxidizing conditions two disulfide bonds are formed involving the reactive cysteines. Under reducing conditions zinc is bound to the reactive cysteines and the protein is inactive.</text>
</comment>
<comment type="similarity">
    <text evidence="1">Belongs to the HSP33 family.</text>
</comment>
<sequence length="293" mass="32478">MSNHDQLHRYLFANHAVRGELVSVNETYQQVLANHDYPPAVQKLLGEMLVATSLLTATLKFDGDITVQLQGGDGPLTLAVINGNNRQEMRGVARVKGEISDDSTLQEMVGNGYLVITITPAQGERYQGVVALEGETIAACLENYFMQSEQLPTRLFIRTGHVADKAAAGGMLLQVLPAQERNEDEFDHLAQLTATIKAEELFTLPANEVLYRLYHQEEVTLYEPQNVSFRCTCSRQRCADALVTLADDDVTEMLEQDGNIDMHCEYCGNHYLFDAVDIATLKNGNSASSEQIH</sequence>
<name>HSLO_YERPB</name>